<evidence type="ECO:0000255" key="1">
    <source>
        <dbReference type="HAMAP-Rule" id="MF_01554"/>
    </source>
</evidence>
<organism>
    <name type="scientific">Neisseria subflava</name>
    <dbReference type="NCBI Taxonomy" id="28449"/>
    <lineage>
        <taxon>Bacteria</taxon>
        <taxon>Pseudomonadati</taxon>
        <taxon>Pseudomonadota</taxon>
        <taxon>Betaproteobacteria</taxon>
        <taxon>Neisseriales</taxon>
        <taxon>Neisseriaceae</taxon>
        <taxon>Neisseria</taxon>
    </lineage>
</organism>
<keyword id="KW-0413">Isomerase</keyword>
<keyword id="KW-0460">Magnesium</keyword>
<keyword id="KW-0479">Metal-binding</keyword>
<keyword id="KW-0597">Phosphoprotein</keyword>
<accession>Q70GH6</accession>
<proteinExistence type="inferred from homology"/>
<dbReference type="EC" id="5.4.2.10" evidence="1"/>
<dbReference type="EMBL" id="AJ581792">
    <property type="protein sequence ID" value="CAE46488.1"/>
    <property type="molecule type" value="Genomic_DNA"/>
</dbReference>
<dbReference type="SMR" id="Q70GH6"/>
<dbReference type="GO" id="GO:0005829">
    <property type="term" value="C:cytosol"/>
    <property type="evidence" value="ECO:0007669"/>
    <property type="project" value="TreeGrafter"/>
</dbReference>
<dbReference type="GO" id="GO:0000287">
    <property type="term" value="F:magnesium ion binding"/>
    <property type="evidence" value="ECO:0007669"/>
    <property type="project" value="UniProtKB-UniRule"/>
</dbReference>
<dbReference type="GO" id="GO:0008966">
    <property type="term" value="F:phosphoglucosamine mutase activity"/>
    <property type="evidence" value="ECO:0007669"/>
    <property type="project" value="UniProtKB-UniRule"/>
</dbReference>
<dbReference type="GO" id="GO:0004615">
    <property type="term" value="F:phosphomannomutase activity"/>
    <property type="evidence" value="ECO:0007669"/>
    <property type="project" value="TreeGrafter"/>
</dbReference>
<dbReference type="GO" id="GO:0005975">
    <property type="term" value="P:carbohydrate metabolic process"/>
    <property type="evidence" value="ECO:0007669"/>
    <property type="project" value="InterPro"/>
</dbReference>
<dbReference type="GO" id="GO:0009252">
    <property type="term" value="P:peptidoglycan biosynthetic process"/>
    <property type="evidence" value="ECO:0007669"/>
    <property type="project" value="TreeGrafter"/>
</dbReference>
<dbReference type="GO" id="GO:0006048">
    <property type="term" value="P:UDP-N-acetylglucosamine biosynthetic process"/>
    <property type="evidence" value="ECO:0007669"/>
    <property type="project" value="TreeGrafter"/>
</dbReference>
<dbReference type="CDD" id="cd05802">
    <property type="entry name" value="GlmM"/>
    <property type="match status" value="1"/>
</dbReference>
<dbReference type="FunFam" id="3.30.310.50:FF:000001">
    <property type="entry name" value="Phosphoglucosamine mutase"/>
    <property type="match status" value="1"/>
</dbReference>
<dbReference type="FunFam" id="3.40.120.10:FF:000001">
    <property type="entry name" value="Phosphoglucosamine mutase"/>
    <property type="match status" value="1"/>
</dbReference>
<dbReference type="FunFam" id="3.40.120.10:FF:000003">
    <property type="entry name" value="Phosphoglucosamine mutase"/>
    <property type="match status" value="1"/>
</dbReference>
<dbReference type="Gene3D" id="3.40.120.10">
    <property type="entry name" value="Alpha-D-Glucose-1,6-Bisphosphate, subunit A, domain 3"/>
    <property type="match status" value="3"/>
</dbReference>
<dbReference type="Gene3D" id="3.30.310.50">
    <property type="entry name" value="Alpha-D-phosphohexomutase, C-terminal domain"/>
    <property type="match status" value="1"/>
</dbReference>
<dbReference type="HAMAP" id="MF_01554_B">
    <property type="entry name" value="GlmM_B"/>
    <property type="match status" value="1"/>
</dbReference>
<dbReference type="InterPro" id="IPR005844">
    <property type="entry name" value="A-D-PHexomutase_a/b/a-I"/>
</dbReference>
<dbReference type="InterPro" id="IPR016055">
    <property type="entry name" value="A-D-PHexomutase_a/b/a-I/II/III"/>
</dbReference>
<dbReference type="InterPro" id="IPR005845">
    <property type="entry name" value="A-D-PHexomutase_a/b/a-II"/>
</dbReference>
<dbReference type="InterPro" id="IPR005846">
    <property type="entry name" value="A-D-PHexomutase_a/b/a-III"/>
</dbReference>
<dbReference type="InterPro" id="IPR005843">
    <property type="entry name" value="A-D-PHexomutase_C"/>
</dbReference>
<dbReference type="InterPro" id="IPR036900">
    <property type="entry name" value="A-D-PHexomutase_C_sf"/>
</dbReference>
<dbReference type="InterPro" id="IPR005841">
    <property type="entry name" value="Alpha-D-phosphohexomutase_SF"/>
</dbReference>
<dbReference type="InterPro" id="IPR006352">
    <property type="entry name" value="GlmM_bact"/>
</dbReference>
<dbReference type="InterPro" id="IPR050060">
    <property type="entry name" value="Phosphoglucosamine_mutase"/>
</dbReference>
<dbReference type="NCBIfam" id="TIGR01455">
    <property type="entry name" value="glmM"/>
    <property type="match status" value="1"/>
</dbReference>
<dbReference type="NCBIfam" id="NF008139">
    <property type="entry name" value="PRK10887.1"/>
    <property type="match status" value="1"/>
</dbReference>
<dbReference type="PANTHER" id="PTHR42946:SF1">
    <property type="entry name" value="PHOSPHOGLUCOMUTASE (ALPHA-D-GLUCOSE-1,6-BISPHOSPHATE-DEPENDENT)"/>
    <property type="match status" value="1"/>
</dbReference>
<dbReference type="PANTHER" id="PTHR42946">
    <property type="entry name" value="PHOSPHOHEXOSE MUTASE"/>
    <property type="match status" value="1"/>
</dbReference>
<dbReference type="Pfam" id="PF02878">
    <property type="entry name" value="PGM_PMM_I"/>
    <property type="match status" value="1"/>
</dbReference>
<dbReference type="Pfam" id="PF02879">
    <property type="entry name" value="PGM_PMM_II"/>
    <property type="match status" value="1"/>
</dbReference>
<dbReference type="Pfam" id="PF02880">
    <property type="entry name" value="PGM_PMM_III"/>
    <property type="match status" value="1"/>
</dbReference>
<dbReference type="Pfam" id="PF00408">
    <property type="entry name" value="PGM_PMM_IV"/>
    <property type="match status" value="1"/>
</dbReference>
<dbReference type="PRINTS" id="PR00509">
    <property type="entry name" value="PGMPMM"/>
</dbReference>
<dbReference type="SUPFAM" id="SSF55957">
    <property type="entry name" value="Phosphoglucomutase, C-terminal domain"/>
    <property type="match status" value="1"/>
</dbReference>
<dbReference type="SUPFAM" id="SSF53738">
    <property type="entry name" value="Phosphoglucomutase, first 3 domains"/>
    <property type="match status" value="3"/>
</dbReference>
<protein>
    <recommendedName>
        <fullName evidence="1">Phosphoglucosamine mutase</fullName>
        <ecNumber evidence="1">5.4.2.10</ecNumber>
    </recommendedName>
</protein>
<comment type="function">
    <text evidence="1">Catalyzes the conversion of glucosamine-6-phosphate to glucosamine-1-phosphate.</text>
</comment>
<comment type="catalytic activity">
    <reaction evidence="1">
        <text>alpha-D-glucosamine 1-phosphate = D-glucosamine 6-phosphate</text>
        <dbReference type="Rhea" id="RHEA:23424"/>
        <dbReference type="ChEBI" id="CHEBI:58516"/>
        <dbReference type="ChEBI" id="CHEBI:58725"/>
        <dbReference type="EC" id="5.4.2.10"/>
    </reaction>
</comment>
<comment type="cofactor">
    <cofactor evidence="1">
        <name>Mg(2+)</name>
        <dbReference type="ChEBI" id="CHEBI:18420"/>
    </cofactor>
    <text evidence="1">Binds 1 Mg(2+) ion per subunit.</text>
</comment>
<comment type="PTM">
    <text evidence="1">Activated by phosphorylation.</text>
</comment>
<comment type="similarity">
    <text evidence="1">Belongs to the phosphohexose mutase family.</text>
</comment>
<reference key="1">
    <citation type="submission" date="2003-09" db="EMBL/GenBank/DDBJ databases">
        <title>Variations in gene organisation and DNA uptake sequence may limit transformational spread of sulphonamide resistance between commensal and pathogenic Neisseria species.</title>
        <authorList>
            <person name="Qvarnstrom Y.L."/>
            <person name="Swedberg G."/>
        </authorList>
    </citation>
    <scope>NUCLEOTIDE SEQUENCE [GENOMIC DNA]</scope>
    <source>
        <strain>ATCC 19243 / CCUG 26468 / CIP 73.12 / N15</strain>
    </source>
</reference>
<gene>
    <name evidence="1" type="primary">glmM</name>
</gene>
<name>GLMM_NEISU</name>
<sequence>MAKKYFGTDGVRGEVGQFPITPDFVLKLGYAAGQVLVQHDGGQKPTVLIGKDTRISGYMLEAALVAGFTAAGVNVIQTGPLPTPGVAYLTRALRLSAGVMISASHNVYSDNGIKFFAEGGVKLSDEIELEIEAKIDEEMKTQPSARLGRARRINGADDRYIEFCKSTFPSHLDLRGLKLVVDTAHGAGYDVAPKVFHELGAQVVSIGDEPNGYNINEKCGATHPKALQAAVLQNEADYGIALDGDGDRLMMVDRNGKVYDGDSLIYVIAKARAREGINIGGVVGTVMTNMAMEIALKEQGVDFCRAKVGDRYVLEQLNQRGWLIGGEASGHILCMDKHNTGDGIISALQVLAALQMLNQDLATICADWQPYPQTMINVRIQKGQKWQEASKDVLAEVEKELEGKGRVVLRASGTEPVVRVMVEARQADWAKKGAERIAAAITGKQ</sequence>
<feature type="chain" id="PRO_0000147922" description="Phosphoglucosamine mutase">
    <location>
        <begin position="1"/>
        <end position="445"/>
    </location>
</feature>
<feature type="active site" description="Phosphoserine intermediate" evidence="1">
    <location>
        <position position="104"/>
    </location>
</feature>
<feature type="binding site" description="via phosphate group" evidence="1">
    <location>
        <position position="104"/>
    </location>
    <ligand>
        <name>Mg(2+)</name>
        <dbReference type="ChEBI" id="CHEBI:18420"/>
    </ligand>
</feature>
<feature type="binding site" evidence="1">
    <location>
        <position position="243"/>
    </location>
    <ligand>
        <name>Mg(2+)</name>
        <dbReference type="ChEBI" id="CHEBI:18420"/>
    </ligand>
</feature>
<feature type="binding site" evidence="1">
    <location>
        <position position="245"/>
    </location>
    <ligand>
        <name>Mg(2+)</name>
        <dbReference type="ChEBI" id="CHEBI:18420"/>
    </ligand>
</feature>
<feature type="binding site" evidence="1">
    <location>
        <position position="247"/>
    </location>
    <ligand>
        <name>Mg(2+)</name>
        <dbReference type="ChEBI" id="CHEBI:18420"/>
    </ligand>
</feature>
<feature type="modified residue" description="Phosphoserine" evidence="1">
    <location>
        <position position="104"/>
    </location>
</feature>